<accession>B1JNS1</accession>
<sequence>MSIENTLPTYPSLALALSQQAVALTPAEMHGLISGMLCGGSKDNGWQTLVHDLTNEGVAFPQALSLPLQQLHEATQEALENEGFMFQLLIPEGEDVTVFDRADALSGWVNHFLLGLGMLQPKLAQVKDEVGEAIDDLRNIAQLGYDEDEDQEELAQSLEEVVEYVRVAAILCHIEFTQQKPTAPEMHKPTLH</sequence>
<dbReference type="EMBL" id="CP000950">
    <property type="protein sequence ID" value="ACA67163.1"/>
    <property type="molecule type" value="Genomic_DNA"/>
</dbReference>
<dbReference type="RefSeq" id="WP_002209953.1">
    <property type="nucleotide sequence ID" value="NZ_CP009792.1"/>
</dbReference>
<dbReference type="SMR" id="B1JNS1"/>
<dbReference type="KEGG" id="ypy:YPK_0862"/>
<dbReference type="PATRIC" id="fig|502800.11.peg.1487"/>
<dbReference type="GO" id="GO:0005829">
    <property type="term" value="C:cytosol"/>
    <property type="evidence" value="ECO:0007669"/>
    <property type="project" value="TreeGrafter"/>
</dbReference>
<dbReference type="FunFam" id="1.20.120.740:FF:000001">
    <property type="entry name" value="UPF0149 protein YgfB"/>
    <property type="match status" value="1"/>
</dbReference>
<dbReference type="Gene3D" id="1.20.120.740">
    <property type="entry name" value="YgfB uncharacterised protein family UPF0149, PF03695"/>
    <property type="match status" value="1"/>
</dbReference>
<dbReference type="HAMAP" id="MF_00346">
    <property type="entry name" value="UPF0149"/>
    <property type="match status" value="1"/>
</dbReference>
<dbReference type="InterPro" id="IPR011978">
    <property type="entry name" value="YgfB-like"/>
</dbReference>
<dbReference type="InterPro" id="IPR036255">
    <property type="entry name" value="YgfB-like_sf"/>
</dbReference>
<dbReference type="NCBIfam" id="NF002477">
    <property type="entry name" value="PRK01736.1"/>
    <property type="match status" value="1"/>
</dbReference>
<dbReference type="NCBIfam" id="TIGR02292">
    <property type="entry name" value="ygfB_yecA"/>
    <property type="match status" value="1"/>
</dbReference>
<dbReference type="PANTHER" id="PTHR37528">
    <property type="entry name" value="UPF0149 PROTEIN YGFB"/>
    <property type="match status" value="1"/>
</dbReference>
<dbReference type="PANTHER" id="PTHR37528:SF1">
    <property type="entry name" value="UPF0149 PROTEIN YGFB"/>
    <property type="match status" value="1"/>
</dbReference>
<dbReference type="Pfam" id="PF03695">
    <property type="entry name" value="UPF0149"/>
    <property type="match status" value="1"/>
</dbReference>
<dbReference type="SUPFAM" id="SSF101327">
    <property type="entry name" value="YgfB-like"/>
    <property type="match status" value="1"/>
</dbReference>
<comment type="similarity">
    <text evidence="1">Belongs to the UPF0149 family.</text>
</comment>
<organism>
    <name type="scientific">Yersinia pseudotuberculosis serotype O:3 (strain YPIII)</name>
    <dbReference type="NCBI Taxonomy" id="502800"/>
    <lineage>
        <taxon>Bacteria</taxon>
        <taxon>Pseudomonadati</taxon>
        <taxon>Pseudomonadota</taxon>
        <taxon>Gammaproteobacteria</taxon>
        <taxon>Enterobacterales</taxon>
        <taxon>Yersiniaceae</taxon>
        <taxon>Yersinia</taxon>
    </lineage>
</organism>
<name>Y862_YERPY</name>
<protein>
    <recommendedName>
        <fullName evidence="1">UPF0149 protein YPK_0862</fullName>
    </recommendedName>
</protein>
<reference key="1">
    <citation type="submission" date="2008-02" db="EMBL/GenBank/DDBJ databases">
        <title>Complete sequence of Yersinia pseudotuberculosis YPIII.</title>
        <authorList>
            <consortium name="US DOE Joint Genome Institute"/>
            <person name="Copeland A."/>
            <person name="Lucas S."/>
            <person name="Lapidus A."/>
            <person name="Glavina del Rio T."/>
            <person name="Dalin E."/>
            <person name="Tice H."/>
            <person name="Bruce D."/>
            <person name="Goodwin L."/>
            <person name="Pitluck S."/>
            <person name="Munk A.C."/>
            <person name="Brettin T."/>
            <person name="Detter J.C."/>
            <person name="Han C."/>
            <person name="Tapia R."/>
            <person name="Schmutz J."/>
            <person name="Larimer F."/>
            <person name="Land M."/>
            <person name="Hauser L."/>
            <person name="Challacombe J.F."/>
            <person name="Green L."/>
            <person name="Lindler L.E."/>
            <person name="Nikolich M.P."/>
            <person name="Richardson P."/>
        </authorList>
    </citation>
    <scope>NUCLEOTIDE SEQUENCE [LARGE SCALE GENOMIC DNA]</scope>
    <source>
        <strain>YPIII</strain>
    </source>
</reference>
<proteinExistence type="inferred from homology"/>
<gene>
    <name type="ordered locus">YPK_0862</name>
</gene>
<evidence type="ECO:0000255" key="1">
    <source>
        <dbReference type="HAMAP-Rule" id="MF_00346"/>
    </source>
</evidence>
<feature type="chain" id="PRO_1000120491" description="UPF0149 protein YPK_0862">
    <location>
        <begin position="1"/>
        <end position="192"/>
    </location>
</feature>